<reference key="1">
    <citation type="submission" date="2007-10" db="EMBL/GenBank/DDBJ databases">
        <title>Complete sequence of Salinispora arenicola CNS-205.</title>
        <authorList>
            <consortium name="US DOE Joint Genome Institute"/>
            <person name="Copeland A."/>
            <person name="Lucas S."/>
            <person name="Lapidus A."/>
            <person name="Barry K."/>
            <person name="Glavina del Rio T."/>
            <person name="Dalin E."/>
            <person name="Tice H."/>
            <person name="Pitluck S."/>
            <person name="Foster B."/>
            <person name="Schmutz J."/>
            <person name="Larimer F."/>
            <person name="Land M."/>
            <person name="Hauser L."/>
            <person name="Kyrpides N."/>
            <person name="Ivanova N."/>
            <person name="Jensen P.R."/>
            <person name="Moore B.S."/>
            <person name="Penn K."/>
            <person name="Jenkins C."/>
            <person name="Udwary D."/>
            <person name="Xiang L."/>
            <person name="Gontang E."/>
            <person name="Richardson P."/>
        </authorList>
    </citation>
    <scope>NUCLEOTIDE SEQUENCE [LARGE SCALE GENOMIC DNA]</scope>
    <source>
        <strain>CNS-205</strain>
    </source>
</reference>
<keyword id="KW-0068">Autocatalytic cleavage</keyword>
<keyword id="KW-0963">Cytoplasm</keyword>
<keyword id="KW-0378">Hydrolase</keyword>
<keyword id="KW-0645">Protease</keyword>
<keyword id="KW-0647">Proteasome</keyword>
<keyword id="KW-0888">Threonine protease</keyword>
<keyword id="KW-0865">Zymogen</keyword>
<organism>
    <name type="scientific">Salinispora arenicola (strain CNS-205)</name>
    <dbReference type="NCBI Taxonomy" id="391037"/>
    <lineage>
        <taxon>Bacteria</taxon>
        <taxon>Bacillati</taxon>
        <taxon>Actinomycetota</taxon>
        <taxon>Actinomycetes</taxon>
        <taxon>Micromonosporales</taxon>
        <taxon>Micromonosporaceae</taxon>
        <taxon>Salinispora</taxon>
    </lineage>
</organism>
<evidence type="ECO:0000255" key="1">
    <source>
        <dbReference type="HAMAP-Rule" id="MF_02113"/>
    </source>
</evidence>
<feature type="propeptide" id="PRO_0000397574" description="Removed in mature form; by autocatalysis" evidence="1">
    <location>
        <begin position="1"/>
        <end position="53"/>
    </location>
</feature>
<feature type="chain" id="PRO_0000397575" description="Proteasome subunit beta">
    <location>
        <begin position="54"/>
        <end position="279"/>
    </location>
</feature>
<feature type="active site" description="Nucleophile" evidence="1">
    <location>
        <position position="54"/>
    </location>
</feature>
<proteinExistence type="inferred from homology"/>
<accession>A8M2A3</accession>
<dbReference type="EC" id="3.4.25.1" evidence="1"/>
<dbReference type="EMBL" id="CP000850">
    <property type="protein sequence ID" value="ABV98219.1"/>
    <property type="molecule type" value="Genomic_DNA"/>
</dbReference>
<dbReference type="SMR" id="A8M2A3"/>
<dbReference type="STRING" id="391037.Sare_2361"/>
<dbReference type="MEROPS" id="T01.005"/>
<dbReference type="KEGG" id="saq:Sare_2361"/>
<dbReference type="eggNOG" id="COG0638">
    <property type="taxonomic scope" value="Bacteria"/>
</dbReference>
<dbReference type="HOGENOM" id="CLU_035750_2_0_11"/>
<dbReference type="UniPathway" id="UPA00997"/>
<dbReference type="GO" id="GO:0005737">
    <property type="term" value="C:cytoplasm"/>
    <property type="evidence" value="ECO:0007669"/>
    <property type="project" value="UniProtKB-SubCell"/>
</dbReference>
<dbReference type="GO" id="GO:0019774">
    <property type="term" value="C:proteasome core complex, beta-subunit complex"/>
    <property type="evidence" value="ECO:0007669"/>
    <property type="project" value="UniProtKB-UniRule"/>
</dbReference>
<dbReference type="GO" id="GO:0004298">
    <property type="term" value="F:threonine-type endopeptidase activity"/>
    <property type="evidence" value="ECO:0007669"/>
    <property type="project" value="UniProtKB-UniRule"/>
</dbReference>
<dbReference type="GO" id="GO:0019941">
    <property type="term" value="P:modification-dependent protein catabolic process"/>
    <property type="evidence" value="ECO:0007669"/>
    <property type="project" value="UniProtKB-UniRule"/>
</dbReference>
<dbReference type="GO" id="GO:0010498">
    <property type="term" value="P:proteasomal protein catabolic process"/>
    <property type="evidence" value="ECO:0007669"/>
    <property type="project" value="UniProtKB-UniRule"/>
</dbReference>
<dbReference type="CDD" id="cd01906">
    <property type="entry name" value="proteasome_protease_HslV"/>
    <property type="match status" value="1"/>
</dbReference>
<dbReference type="Gene3D" id="3.60.20.10">
    <property type="entry name" value="Glutamine Phosphoribosylpyrophosphate, subunit 1, domain 1"/>
    <property type="match status" value="1"/>
</dbReference>
<dbReference type="HAMAP" id="MF_02113_B">
    <property type="entry name" value="Proteasome_B_B"/>
    <property type="match status" value="1"/>
</dbReference>
<dbReference type="InterPro" id="IPR029055">
    <property type="entry name" value="Ntn_hydrolases_N"/>
</dbReference>
<dbReference type="InterPro" id="IPR001353">
    <property type="entry name" value="Proteasome_sua/b"/>
</dbReference>
<dbReference type="InterPro" id="IPR023333">
    <property type="entry name" value="Proteasome_suB-type"/>
</dbReference>
<dbReference type="InterPro" id="IPR022483">
    <property type="entry name" value="PSB_actinobac"/>
</dbReference>
<dbReference type="NCBIfam" id="TIGR03690">
    <property type="entry name" value="20S_bact_beta"/>
    <property type="match status" value="1"/>
</dbReference>
<dbReference type="PANTHER" id="PTHR32194:SF0">
    <property type="entry name" value="ATP-DEPENDENT PROTEASE SUBUNIT HSLV"/>
    <property type="match status" value="1"/>
</dbReference>
<dbReference type="PANTHER" id="PTHR32194">
    <property type="entry name" value="METALLOPROTEASE TLDD"/>
    <property type="match status" value="1"/>
</dbReference>
<dbReference type="Pfam" id="PF00227">
    <property type="entry name" value="Proteasome"/>
    <property type="match status" value="1"/>
</dbReference>
<dbReference type="SUPFAM" id="SSF56235">
    <property type="entry name" value="N-terminal nucleophile aminohydrolases (Ntn hydrolases)"/>
    <property type="match status" value="1"/>
</dbReference>
<dbReference type="PROSITE" id="PS51476">
    <property type="entry name" value="PROTEASOME_BETA_2"/>
    <property type="match status" value="1"/>
</dbReference>
<sequence>MAAAFDPSGRLPDLFTSAGTSSFSAFLSMAAPELLPGRRPLPPGTAADLTPHATTIVAIAAAGGVVMAGDRRATMGNLIAQRDIEKVYPADAYSLVGMAGAAGIGIELIRLFQVELEHYEKIEGAMLSLDGKANRLAAMVRGNLGAAMQGLAVVPMFAGFDLAANDPVKAGRIFSFDVTGGPYEETGYDAVGSGSLFAKSALKKRFRVGLSVDDAMRLAVEALYDAADDDTATGGPDLTRRIYPVVMTVTAEGTHRLTEAETAAIAENVVAGRMENPGG</sequence>
<gene>
    <name evidence="1" type="primary">prcB</name>
    <name type="ordered locus">Sare_2361</name>
</gene>
<comment type="function">
    <text evidence="1">Component of the proteasome core, a large protease complex with broad specificity involved in protein degradation.</text>
</comment>
<comment type="catalytic activity">
    <reaction evidence="1">
        <text>Cleavage of peptide bonds with very broad specificity.</text>
        <dbReference type="EC" id="3.4.25.1"/>
    </reaction>
</comment>
<comment type="activity regulation">
    <text evidence="1">The formation of the proteasomal ATPase ARC-20S proteasome complex, likely via the docking of the C-termini of ARC into the intersubunit pockets in the alpha-rings, may trigger opening of the gate for substrate entry. Interconversion between the open-gate and close-gate conformations leads to a dynamic regulation of the 20S proteasome proteolysis activity.</text>
</comment>
<comment type="pathway">
    <text evidence="1">Protein degradation; proteasomal Pup-dependent pathway.</text>
</comment>
<comment type="subunit">
    <text evidence="1">The 20S proteasome core is composed of 14 alpha and 14 beta subunits that assemble into four stacked heptameric rings, resulting in a barrel-shaped structure. The two inner rings, each composed of seven catalytic beta subunits, are sandwiched by two outer rings, each composed of seven alpha subunits. The catalytic chamber with the active sites is on the inside of the barrel. Has a gated structure, the ends of the cylinder being occluded by the N-termini of the alpha-subunits. Is capped by the proteasome-associated ATPase, ARC.</text>
</comment>
<comment type="subcellular location">
    <subcellularLocation>
        <location evidence="1">Cytoplasm</location>
    </subcellularLocation>
</comment>
<comment type="similarity">
    <text evidence="1">Belongs to the peptidase T1B family.</text>
</comment>
<name>PSB_SALAI</name>
<protein>
    <recommendedName>
        <fullName evidence="1">Proteasome subunit beta</fullName>
        <ecNumber evidence="1">3.4.25.1</ecNumber>
    </recommendedName>
    <alternativeName>
        <fullName evidence="1">20S proteasome beta subunit</fullName>
    </alternativeName>
    <alternativeName>
        <fullName evidence="1">Proteasome core protein PrcB</fullName>
    </alternativeName>
</protein>